<feature type="chain" id="PRO_0000228574" description="Ribonuclease 3">
    <location>
        <begin position="1"/>
        <end position="272"/>
    </location>
</feature>
<feature type="domain" description="RNase III" evidence="1">
    <location>
        <begin position="44"/>
        <end position="171"/>
    </location>
</feature>
<feature type="domain" description="DRBM" evidence="1">
    <location>
        <begin position="196"/>
        <end position="265"/>
    </location>
</feature>
<feature type="region of interest" description="Disordered" evidence="2">
    <location>
        <begin position="1"/>
        <end position="38"/>
    </location>
</feature>
<feature type="compositionally biased region" description="Polar residues" evidence="2">
    <location>
        <begin position="1"/>
        <end position="20"/>
    </location>
</feature>
<feature type="active site" evidence="1">
    <location>
        <position position="88"/>
    </location>
</feature>
<feature type="active site" evidence="1">
    <location>
        <position position="160"/>
    </location>
</feature>
<feature type="binding site" evidence="1">
    <location>
        <position position="84"/>
    </location>
    <ligand>
        <name>Mg(2+)</name>
        <dbReference type="ChEBI" id="CHEBI:18420"/>
    </ligand>
</feature>
<feature type="binding site" evidence="1">
    <location>
        <position position="157"/>
    </location>
    <ligand>
        <name>Mg(2+)</name>
        <dbReference type="ChEBI" id="CHEBI:18420"/>
    </ligand>
</feature>
<feature type="binding site" evidence="1">
    <location>
        <position position="160"/>
    </location>
    <ligand>
        <name>Mg(2+)</name>
        <dbReference type="ChEBI" id="CHEBI:18420"/>
    </ligand>
</feature>
<accession>Q6N6C1</accession>
<organism>
    <name type="scientific">Rhodopseudomonas palustris (strain ATCC BAA-98 / CGA009)</name>
    <dbReference type="NCBI Taxonomy" id="258594"/>
    <lineage>
        <taxon>Bacteria</taxon>
        <taxon>Pseudomonadati</taxon>
        <taxon>Pseudomonadota</taxon>
        <taxon>Alphaproteobacteria</taxon>
        <taxon>Hyphomicrobiales</taxon>
        <taxon>Nitrobacteraceae</taxon>
        <taxon>Rhodopseudomonas</taxon>
    </lineage>
</organism>
<proteinExistence type="inferred from homology"/>
<name>RNC_RHOPA</name>
<keyword id="KW-0963">Cytoplasm</keyword>
<keyword id="KW-0255">Endonuclease</keyword>
<keyword id="KW-0378">Hydrolase</keyword>
<keyword id="KW-0460">Magnesium</keyword>
<keyword id="KW-0479">Metal-binding</keyword>
<keyword id="KW-0507">mRNA processing</keyword>
<keyword id="KW-0540">Nuclease</keyword>
<keyword id="KW-0694">RNA-binding</keyword>
<keyword id="KW-0698">rRNA processing</keyword>
<keyword id="KW-0699">rRNA-binding</keyword>
<keyword id="KW-0819">tRNA processing</keyword>
<comment type="function">
    <text evidence="1">Digests double-stranded RNA. Involved in the processing of primary rRNA transcript to yield the immediate precursors to the large and small rRNAs (23S and 16S). Processes some mRNAs, and tRNAs when they are encoded in the rRNA operon. Processes pre-crRNA and tracrRNA of type II CRISPR loci if present in the organism.</text>
</comment>
<comment type="catalytic activity">
    <reaction evidence="1">
        <text>Endonucleolytic cleavage to 5'-phosphomonoester.</text>
        <dbReference type="EC" id="3.1.26.3"/>
    </reaction>
</comment>
<comment type="cofactor">
    <cofactor evidence="1">
        <name>Mg(2+)</name>
        <dbReference type="ChEBI" id="CHEBI:18420"/>
    </cofactor>
</comment>
<comment type="subunit">
    <text evidence="1">Homodimer.</text>
</comment>
<comment type="subcellular location">
    <subcellularLocation>
        <location evidence="1">Cytoplasm</location>
    </subcellularLocation>
</comment>
<comment type="similarity">
    <text evidence="1">Belongs to the ribonuclease III family.</text>
</comment>
<reference key="1">
    <citation type="journal article" date="2004" name="Nat. Biotechnol.">
        <title>Complete genome sequence of the metabolically versatile photosynthetic bacterium Rhodopseudomonas palustris.</title>
        <authorList>
            <person name="Larimer F.W."/>
            <person name="Chain P."/>
            <person name="Hauser L."/>
            <person name="Lamerdin J.E."/>
            <person name="Malfatti S."/>
            <person name="Do L."/>
            <person name="Land M.L."/>
            <person name="Pelletier D.A."/>
            <person name="Beatty J.T."/>
            <person name="Lang A.S."/>
            <person name="Tabita F.R."/>
            <person name="Gibson J.L."/>
            <person name="Hanson T.E."/>
            <person name="Bobst C."/>
            <person name="Torres y Torres J.L."/>
            <person name="Peres C."/>
            <person name="Harrison F.H."/>
            <person name="Gibson J."/>
            <person name="Harwood C.S."/>
        </authorList>
    </citation>
    <scope>NUCLEOTIDE SEQUENCE [LARGE SCALE GENOMIC DNA]</scope>
    <source>
        <strain>ATCC BAA-98 / CGA009</strain>
    </source>
</reference>
<gene>
    <name evidence="1" type="primary">rnc</name>
    <name type="ordered locus">RPA2697</name>
</gene>
<dbReference type="EC" id="3.1.26.3" evidence="1"/>
<dbReference type="EMBL" id="BX572601">
    <property type="protein sequence ID" value="CAE28138.1"/>
    <property type="molecule type" value="Genomic_DNA"/>
</dbReference>
<dbReference type="RefSeq" id="WP_011158247.1">
    <property type="nucleotide sequence ID" value="NZ_CP116810.1"/>
</dbReference>
<dbReference type="SMR" id="Q6N6C1"/>
<dbReference type="STRING" id="258594.RPA2697"/>
<dbReference type="GeneID" id="66893772"/>
<dbReference type="eggNOG" id="COG0571">
    <property type="taxonomic scope" value="Bacteria"/>
</dbReference>
<dbReference type="HOGENOM" id="CLU_000907_1_1_5"/>
<dbReference type="PhylomeDB" id="Q6N6C1"/>
<dbReference type="GO" id="GO:0005737">
    <property type="term" value="C:cytoplasm"/>
    <property type="evidence" value="ECO:0007669"/>
    <property type="project" value="UniProtKB-SubCell"/>
</dbReference>
<dbReference type="GO" id="GO:0003725">
    <property type="term" value="F:double-stranded RNA binding"/>
    <property type="evidence" value="ECO:0007669"/>
    <property type="project" value="TreeGrafter"/>
</dbReference>
<dbReference type="GO" id="GO:0046872">
    <property type="term" value="F:metal ion binding"/>
    <property type="evidence" value="ECO:0007669"/>
    <property type="project" value="UniProtKB-KW"/>
</dbReference>
<dbReference type="GO" id="GO:0004525">
    <property type="term" value="F:ribonuclease III activity"/>
    <property type="evidence" value="ECO:0007669"/>
    <property type="project" value="UniProtKB-UniRule"/>
</dbReference>
<dbReference type="GO" id="GO:0019843">
    <property type="term" value="F:rRNA binding"/>
    <property type="evidence" value="ECO:0007669"/>
    <property type="project" value="UniProtKB-KW"/>
</dbReference>
<dbReference type="GO" id="GO:0006397">
    <property type="term" value="P:mRNA processing"/>
    <property type="evidence" value="ECO:0007669"/>
    <property type="project" value="UniProtKB-UniRule"/>
</dbReference>
<dbReference type="GO" id="GO:0010468">
    <property type="term" value="P:regulation of gene expression"/>
    <property type="evidence" value="ECO:0007669"/>
    <property type="project" value="TreeGrafter"/>
</dbReference>
<dbReference type="GO" id="GO:0006364">
    <property type="term" value="P:rRNA processing"/>
    <property type="evidence" value="ECO:0007669"/>
    <property type="project" value="UniProtKB-UniRule"/>
</dbReference>
<dbReference type="GO" id="GO:0008033">
    <property type="term" value="P:tRNA processing"/>
    <property type="evidence" value="ECO:0007669"/>
    <property type="project" value="UniProtKB-KW"/>
</dbReference>
<dbReference type="CDD" id="cd10845">
    <property type="entry name" value="DSRM_RNAse_III_family"/>
    <property type="match status" value="1"/>
</dbReference>
<dbReference type="CDD" id="cd00593">
    <property type="entry name" value="RIBOc"/>
    <property type="match status" value="1"/>
</dbReference>
<dbReference type="FunFam" id="1.10.1520.10:FF:000001">
    <property type="entry name" value="Ribonuclease 3"/>
    <property type="match status" value="1"/>
</dbReference>
<dbReference type="FunFam" id="3.30.160.20:FF:000003">
    <property type="entry name" value="Ribonuclease 3"/>
    <property type="match status" value="1"/>
</dbReference>
<dbReference type="Gene3D" id="3.30.160.20">
    <property type="match status" value="1"/>
</dbReference>
<dbReference type="Gene3D" id="1.10.1520.10">
    <property type="entry name" value="Ribonuclease III domain"/>
    <property type="match status" value="1"/>
</dbReference>
<dbReference type="HAMAP" id="MF_00104">
    <property type="entry name" value="RNase_III"/>
    <property type="match status" value="1"/>
</dbReference>
<dbReference type="InterPro" id="IPR014720">
    <property type="entry name" value="dsRBD_dom"/>
</dbReference>
<dbReference type="InterPro" id="IPR011907">
    <property type="entry name" value="RNase_III"/>
</dbReference>
<dbReference type="InterPro" id="IPR000999">
    <property type="entry name" value="RNase_III_dom"/>
</dbReference>
<dbReference type="InterPro" id="IPR036389">
    <property type="entry name" value="RNase_III_sf"/>
</dbReference>
<dbReference type="NCBIfam" id="TIGR02191">
    <property type="entry name" value="RNaseIII"/>
    <property type="match status" value="1"/>
</dbReference>
<dbReference type="PANTHER" id="PTHR11207:SF0">
    <property type="entry name" value="RIBONUCLEASE 3"/>
    <property type="match status" value="1"/>
</dbReference>
<dbReference type="PANTHER" id="PTHR11207">
    <property type="entry name" value="RIBONUCLEASE III"/>
    <property type="match status" value="1"/>
</dbReference>
<dbReference type="Pfam" id="PF00035">
    <property type="entry name" value="dsrm"/>
    <property type="match status" value="1"/>
</dbReference>
<dbReference type="Pfam" id="PF14622">
    <property type="entry name" value="Ribonucleas_3_3"/>
    <property type="match status" value="1"/>
</dbReference>
<dbReference type="SMART" id="SM00358">
    <property type="entry name" value="DSRM"/>
    <property type="match status" value="1"/>
</dbReference>
<dbReference type="SMART" id="SM00535">
    <property type="entry name" value="RIBOc"/>
    <property type="match status" value="1"/>
</dbReference>
<dbReference type="SUPFAM" id="SSF54768">
    <property type="entry name" value="dsRNA-binding domain-like"/>
    <property type="match status" value="1"/>
</dbReference>
<dbReference type="SUPFAM" id="SSF69065">
    <property type="entry name" value="RNase III domain-like"/>
    <property type="match status" value="1"/>
</dbReference>
<dbReference type="PROSITE" id="PS50137">
    <property type="entry name" value="DS_RBD"/>
    <property type="match status" value="1"/>
</dbReference>
<dbReference type="PROSITE" id="PS00517">
    <property type="entry name" value="RNASE_3_1"/>
    <property type="match status" value="1"/>
</dbReference>
<dbReference type="PROSITE" id="PS50142">
    <property type="entry name" value="RNASE_3_2"/>
    <property type="match status" value="1"/>
</dbReference>
<evidence type="ECO:0000255" key="1">
    <source>
        <dbReference type="HAMAP-Rule" id="MF_00104"/>
    </source>
</evidence>
<evidence type="ECO:0000256" key="2">
    <source>
        <dbReference type="SAM" id="MobiDB-lite"/>
    </source>
</evidence>
<protein>
    <recommendedName>
        <fullName evidence="1">Ribonuclease 3</fullName>
        <ecNumber evidence="1">3.1.26.3</ecNumber>
    </recommendedName>
    <alternativeName>
        <fullName evidence="1">Ribonuclease III</fullName>
        <shortName evidence="1">RNase III</shortName>
    </alternativeName>
</protein>
<sequence>MTDDVTNVEQPSTASEQQPQDVPAAEPSAAKKRRANKAKSKATAAAIEQRLGHSFADPSLLTTAFTHVSALKSARRTDSYQRLEFLGDHVLGLIVSDMLYRAFPDADEGELSKRLADLVRKETCADVARSLDLVEGIKLGTVGAGAGAKLRKSVLGDICEAVIGAIYLDGGYEAASDFVRRNWTERMRKPARSLRDPKTVLQEWAQARGLPTPVYREVERTGPHHDPQFRVAVILPGLEPAEGLGGSKRAAEKVAASAMLAREGVGTGGNDG</sequence>